<feature type="chain" id="PRO_0000381566" description="Biotin synthase">
    <location>
        <begin position="1"/>
        <end position="352"/>
    </location>
</feature>
<feature type="domain" description="Radical SAM core" evidence="2">
    <location>
        <begin position="44"/>
        <end position="262"/>
    </location>
</feature>
<feature type="binding site" evidence="1">
    <location>
        <position position="59"/>
    </location>
    <ligand>
        <name>[4Fe-4S] cluster</name>
        <dbReference type="ChEBI" id="CHEBI:49883"/>
        <note>4Fe-4S-S-AdoMet</note>
    </ligand>
</feature>
<feature type="binding site" evidence="1">
    <location>
        <position position="63"/>
    </location>
    <ligand>
        <name>[4Fe-4S] cluster</name>
        <dbReference type="ChEBI" id="CHEBI:49883"/>
        <note>4Fe-4S-S-AdoMet</note>
    </ligand>
</feature>
<feature type="binding site" evidence="1">
    <location>
        <position position="66"/>
    </location>
    <ligand>
        <name>[4Fe-4S] cluster</name>
        <dbReference type="ChEBI" id="CHEBI:49883"/>
        <note>4Fe-4S-S-AdoMet</note>
    </ligand>
</feature>
<feature type="binding site" evidence="1">
    <location>
        <position position="103"/>
    </location>
    <ligand>
        <name>[2Fe-2S] cluster</name>
        <dbReference type="ChEBI" id="CHEBI:190135"/>
    </ligand>
</feature>
<feature type="binding site" evidence="1">
    <location>
        <position position="134"/>
    </location>
    <ligand>
        <name>[2Fe-2S] cluster</name>
        <dbReference type="ChEBI" id="CHEBI:190135"/>
    </ligand>
</feature>
<feature type="binding site" evidence="1">
    <location>
        <position position="194"/>
    </location>
    <ligand>
        <name>[2Fe-2S] cluster</name>
        <dbReference type="ChEBI" id="CHEBI:190135"/>
    </ligand>
</feature>
<feature type="binding site" evidence="1">
    <location>
        <position position="266"/>
    </location>
    <ligand>
        <name>[2Fe-2S] cluster</name>
        <dbReference type="ChEBI" id="CHEBI:190135"/>
    </ligand>
</feature>
<keyword id="KW-0001">2Fe-2S</keyword>
<keyword id="KW-0004">4Fe-4S</keyword>
<keyword id="KW-0093">Biotin biosynthesis</keyword>
<keyword id="KW-0408">Iron</keyword>
<keyword id="KW-0411">Iron-sulfur</keyword>
<keyword id="KW-0479">Metal-binding</keyword>
<keyword id="KW-0949">S-adenosyl-L-methionine</keyword>
<keyword id="KW-0808">Transferase</keyword>
<dbReference type="EC" id="2.8.1.6" evidence="1"/>
<dbReference type="EMBL" id="CP000075">
    <property type="protein sequence ID" value="AAY39714.1"/>
    <property type="molecule type" value="Genomic_DNA"/>
</dbReference>
<dbReference type="RefSeq" id="WP_003372416.1">
    <property type="nucleotide sequence ID" value="NC_007005.1"/>
</dbReference>
<dbReference type="RefSeq" id="YP_237752.1">
    <property type="nucleotide sequence ID" value="NC_007005.1"/>
</dbReference>
<dbReference type="SMR" id="Q4ZMA8"/>
<dbReference type="STRING" id="205918.Psyr_4687"/>
<dbReference type="KEGG" id="psb:Psyr_4687"/>
<dbReference type="PATRIC" id="fig|205918.7.peg.4833"/>
<dbReference type="eggNOG" id="COG0502">
    <property type="taxonomic scope" value="Bacteria"/>
</dbReference>
<dbReference type="HOGENOM" id="CLU_033172_1_2_6"/>
<dbReference type="OrthoDB" id="9786826at2"/>
<dbReference type="UniPathway" id="UPA00078">
    <property type="reaction ID" value="UER00162"/>
</dbReference>
<dbReference type="Proteomes" id="UP000000426">
    <property type="component" value="Chromosome"/>
</dbReference>
<dbReference type="GO" id="GO:0051537">
    <property type="term" value="F:2 iron, 2 sulfur cluster binding"/>
    <property type="evidence" value="ECO:0007669"/>
    <property type="project" value="UniProtKB-KW"/>
</dbReference>
<dbReference type="GO" id="GO:0051539">
    <property type="term" value="F:4 iron, 4 sulfur cluster binding"/>
    <property type="evidence" value="ECO:0007669"/>
    <property type="project" value="UniProtKB-KW"/>
</dbReference>
<dbReference type="GO" id="GO:0004076">
    <property type="term" value="F:biotin synthase activity"/>
    <property type="evidence" value="ECO:0007669"/>
    <property type="project" value="UniProtKB-UniRule"/>
</dbReference>
<dbReference type="GO" id="GO:0005506">
    <property type="term" value="F:iron ion binding"/>
    <property type="evidence" value="ECO:0007669"/>
    <property type="project" value="UniProtKB-UniRule"/>
</dbReference>
<dbReference type="GO" id="GO:0009102">
    <property type="term" value="P:biotin biosynthetic process"/>
    <property type="evidence" value="ECO:0007669"/>
    <property type="project" value="UniProtKB-UniRule"/>
</dbReference>
<dbReference type="CDD" id="cd01335">
    <property type="entry name" value="Radical_SAM"/>
    <property type="match status" value="1"/>
</dbReference>
<dbReference type="FunFam" id="3.20.20.70:FF:000011">
    <property type="entry name" value="Biotin synthase"/>
    <property type="match status" value="1"/>
</dbReference>
<dbReference type="Gene3D" id="3.20.20.70">
    <property type="entry name" value="Aldolase class I"/>
    <property type="match status" value="1"/>
</dbReference>
<dbReference type="HAMAP" id="MF_01694">
    <property type="entry name" value="BioB"/>
    <property type="match status" value="1"/>
</dbReference>
<dbReference type="InterPro" id="IPR013785">
    <property type="entry name" value="Aldolase_TIM"/>
</dbReference>
<dbReference type="InterPro" id="IPR010722">
    <property type="entry name" value="BATS_dom"/>
</dbReference>
<dbReference type="InterPro" id="IPR002684">
    <property type="entry name" value="Biotin_synth/BioAB"/>
</dbReference>
<dbReference type="InterPro" id="IPR024177">
    <property type="entry name" value="Biotin_synthase"/>
</dbReference>
<dbReference type="InterPro" id="IPR006638">
    <property type="entry name" value="Elp3/MiaA/NifB-like_rSAM"/>
</dbReference>
<dbReference type="InterPro" id="IPR007197">
    <property type="entry name" value="rSAM"/>
</dbReference>
<dbReference type="NCBIfam" id="TIGR00433">
    <property type="entry name" value="bioB"/>
    <property type="match status" value="1"/>
</dbReference>
<dbReference type="PANTHER" id="PTHR22976">
    <property type="entry name" value="BIOTIN SYNTHASE"/>
    <property type="match status" value="1"/>
</dbReference>
<dbReference type="PANTHER" id="PTHR22976:SF2">
    <property type="entry name" value="BIOTIN SYNTHASE, MITOCHONDRIAL"/>
    <property type="match status" value="1"/>
</dbReference>
<dbReference type="Pfam" id="PF06968">
    <property type="entry name" value="BATS"/>
    <property type="match status" value="1"/>
</dbReference>
<dbReference type="Pfam" id="PF04055">
    <property type="entry name" value="Radical_SAM"/>
    <property type="match status" value="1"/>
</dbReference>
<dbReference type="PIRSF" id="PIRSF001619">
    <property type="entry name" value="Biotin_synth"/>
    <property type="match status" value="1"/>
</dbReference>
<dbReference type="SFLD" id="SFLDG01060">
    <property type="entry name" value="BATS_domain_containing"/>
    <property type="match status" value="1"/>
</dbReference>
<dbReference type="SFLD" id="SFLDF00272">
    <property type="entry name" value="biotin_synthase"/>
    <property type="match status" value="1"/>
</dbReference>
<dbReference type="SMART" id="SM00876">
    <property type="entry name" value="BATS"/>
    <property type="match status" value="1"/>
</dbReference>
<dbReference type="SMART" id="SM00729">
    <property type="entry name" value="Elp3"/>
    <property type="match status" value="1"/>
</dbReference>
<dbReference type="SUPFAM" id="SSF102114">
    <property type="entry name" value="Radical SAM enzymes"/>
    <property type="match status" value="1"/>
</dbReference>
<dbReference type="PROSITE" id="PS51918">
    <property type="entry name" value="RADICAL_SAM"/>
    <property type="match status" value="1"/>
</dbReference>
<name>BIOB_PSEU2</name>
<accession>Q4ZMA8</accession>
<sequence>MSASTTATLRHDWTLAEVRALFVQPFNDLLFQAQTVHRAHFDANRVQVSTLLSIKTGACPEDCKYCPQSGHYNTGLEKEKLLEVQKVLEEAARAKAIGSTRFCMGAAWKHPSAKDMPYVLEMVKGVKAMGMETCMTLGRLDQEQTEALATAGLDYYNHNLDTSPEFYGSIITTRTYSERLQTLAYVRDAGMKICSGGILGMGESLDDRAGLLIQLANLPEHPESVPINMLVKVAGTPLENAEDVDPFDFIRMLAVARILMPKSHVRLSAGREAMNEQMQALAFFAGANSIFYGDKLLTTANPQADKDMLLFSRLGIKPEAGEGHADEVHQAAIEQALVEQQSSSMFYDAASA</sequence>
<proteinExistence type="inferred from homology"/>
<evidence type="ECO:0000255" key="1">
    <source>
        <dbReference type="HAMAP-Rule" id="MF_01694"/>
    </source>
</evidence>
<evidence type="ECO:0000255" key="2">
    <source>
        <dbReference type="PROSITE-ProRule" id="PRU01266"/>
    </source>
</evidence>
<comment type="function">
    <text evidence="1">Catalyzes the conversion of dethiobiotin (DTB) to biotin by the insertion of a sulfur atom into dethiobiotin via a radical-based mechanism.</text>
</comment>
<comment type="catalytic activity">
    <reaction evidence="1">
        <text>(4R,5S)-dethiobiotin + (sulfur carrier)-SH + 2 reduced [2Fe-2S]-[ferredoxin] + 2 S-adenosyl-L-methionine = (sulfur carrier)-H + biotin + 2 5'-deoxyadenosine + 2 L-methionine + 2 oxidized [2Fe-2S]-[ferredoxin]</text>
        <dbReference type="Rhea" id="RHEA:22060"/>
        <dbReference type="Rhea" id="RHEA-COMP:10000"/>
        <dbReference type="Rhea" id="RHEA-COMP:10001"/>
        <dbReference type="Rhea" id="RHEA-COMP:14737"/>
        <dbReference type="Rhea" id="RHEA-COMP:14739"/>
        <dbReference type="ChEBI" id="CHEBI:17319"/>
        <dbReference type="ChEBI" id="CHEBI:29917"/>
        <dbReference type="ChEBI" id="CHEBI:33737"/>
        <dbReference type="ChEBI" id="CHEBI:33738"/>
        <dbReference type="ChEBI" id="CHEBI:57586"/>
        <dbReference type="ChEBI" id="CHEBI:57844"/>
        <dbReference type="ChEBI" id="CHEBI:59789"/>
        <dbReference type="ChEBI" id="CHEBI:64428"/>
        <dbReference type="ChEBI" id="CHEBI:149473"/>
        <dbReference type="EC" id="2.8.1.6"/>
    </reaction>
</comment>
<comment type="cofactor">
    <cofactor evidence="1">
        <name>[4Fe-4S] cluster</name>
        <dbReference type="ChEBI" id="CHEBI:49883"/>
    </cofactor>
    <text evidence="1">Binds 1 [4Fe-4S] cluster. The cluster is coordinated with 3 cysteines and an exchangeable S-adenosyl-L-methionine.</text>
</comment>
<comment type="cofactor">
    <cofactor evidence="1">
        <name>[2Fe-2S] cluster</name>
        <dbReference type="ChEBI" id="CHEBI:190135"/>
    </cofactor>
    <text evidence="1">Binds 1 [2Fe-2S] cluster. The cluster is coordinated with 3 cysteines and 1 arginine.</text>
</comment>
<comment type="pathway">
    <text evidence="1">Cofactor biosynthesis; biotin biosynthesis; biotin from 7,8-diaminononanoate: step 2/2.</text>
</comment>
<comment type="subunit">
    <text evidence="1">Homodimer.</text>
</comment>
<comment type="similarity">
    <text evidence="1">Belongs to the radical SAM superfamily. Biotin synthase family.</text>
</comment>
<gene>
    <name evidence="1" type="primary">bioB</name>
    <name type="ordered locus">Psyr_4687</name>
</gene>
<protein>
    <recommendedName>
        <fullName evidence="1">Biotin synthase</fullName>
        <ecNumber evidence="1">2.8.1.6</ecNumber>
    </recommendedName>
</protein>
<reference key="1">
    <citation type="journal article" date="2005" name="Proc. Natl. Acad. Sci. U.S.A.">
        <title>Comparison of the complete genome sequences of Pseudomonas syringae pv. syringae B728a and pv. tomato DC3000.</title>
        <authorList>
            <person name="Feil H."/>
            <person name="Feil W.S."/>
            <person name="Chain P."/>
            <person name="Larimer F."/>
            <person name="Dibartolo G."/>
            <person name="Copeland A."/>
            <person name="Lykidis A."/>
            <person name="Trong S."/>
            <person name="Nolan M."/>
            <person name="Goltsman E."/>
            <person name="Thiel J."/>
            <person name="Malfatti S."/>
            <person name="Loper J.E."/>
            <person name="Lapidus A."/>
            <person name="Detter J.C."/>
            <person name="Land M."/>
            <person name="Richardson P.M."/>
            <person name="Kyrpides N.C."/>
            <person name="Ivanova N."/>
            <person name="Lindow S.E."/>
        </authorList>
    </citation>
    <scope>NUCLEOTIDE SEQUENCE [LARGE SCALE GENOMIC DNA]</scope>
    <source>
        <strain>B728a</strain>
    </source>
</reference>
<organism>
    <name type="scientific">Pseudomonas syringae pv. syringae (strain B728a)</name>
    <dbReference type="NCBI Taxonomy" id="205918"/>
    <lineage>
        <taxon>Bacteria</taxon>
        <taxon>Pseudomonadati</taxon>
        <taxon>Pseudomonadota</taxon>
        <taxon>Gammaproteobacteria</taxon>
        <taxon>Pseudomonadales</taxon>
        <taxon>Pseudomonadaceae</taxon>
        <taxon>Pseudomonas</taxon>
        <taxon>Pseudomonas syringae</taxon>
    </lineage>
</organism>